<gene>
    <name evidence="1" type="primary">rbfA</name>
    <name type="ordered locus">LAF_0734</name>
</gene>
<feature type="chain" id="PRO_1000088899" description="Ribosome-binding factor A">
    <location>
        <begin position="1"/>
        <end position="120"/>
    </location>
</feature>
<proteinExistence type="inferred from homology"/>
<comment type="function">
    <text evidence="1">One of several proteins that assist in the late maturation steps of the functional core of the 30S ribosomal subunit. Associates with free 30S ribosomal subunits (but not with 30S subunits that are part of 70S ribosomes or polysomes). Required for efficient processing of 16S rRNA. May interact with the 5'-terminal helix region of 16S rRNA.</text>
</comment>
<comment type="subunit">
    <text evidence="1">Monomer. Binds 30S ribosomal subunits, but not 50S ribosomal subunits or 70S ribosomes.</text>
</comment>
<comment type="subcellular location">
    <subcellularLocation>
        <location evidence="1">Cytoplasm</location>
    </subcellularLocation>
</comment>
<comment type="similarity">
    <text evidence="1">Belongs to the RbfA family.</text>
</comment>
<organism>
    <name type="scientific">Limosilactobacillus fermentum (strain NBRC 3956 / LMG 18251)</name>
    <name type="common">Lactobacillus fermentum</name>
    <dbReference type="NCBI Taxonomy" id="334390"/>
    <lineage>
        <taxon>Bacteria</taxon>
        <taxon>Bacillati</taxon>
        <taxon>Bacillota</taxon>
        <taxon>Bacilli</taxon>
        <taxon>Lactobacillales</taxon>
        <taxon>Lactobacillaceae</taxon>
        <taxon>Limosilactobacillus</taxon>
    </lineage>
</organism>
<dbReference type="EMBL" id="AP008937">
    <property type="protein sequence ID" value="BAG27070.1"/>
    <property type="molecule type" value="Genomic_DNA"/>
</dbReference>
<dbReference type="RefSeq" id="WP_003685195.1">
    <property type="nucleotide sequence ID" value="NC_010610.1"/>
</dbReference>
<dbReference type="SMR" id="B2GBN8"/>
<dbReference type="GeneID" id="83714895"/>
<dbReference type="KEGG" id="lfe:LAF_0734"/>
<dbReference type="eggNOG" id="COG0858">
    <property type="taxonomic scope" value="Bacteria"/>
</dbReference>
<dbReference type="HOGENOM" id="CLU_089475_3_0_9"/>
<dbReference type="Proteomes" id="UP000001697">
    <property type="component" value="Chromosome"/>
</dbReference>
<dbReference type="GO" id="GO:0005829">
    <property type="term" value="C:cytosol"/>
    <property type="evidence" value="ECO:0007669"/>
    <property type="project" value="TreeGrafter"/>
</dbReference>
<dbReference type="GO" id="GO:0043024">
    <property type="term" value="F:ribosomal small subunit binding"/>
    <property type="evidence" value="ECO:0007669"/>
    <property type="project" value="TreeGrafter"/>
</dbReference>
<dbReference type="GO" id="GO:0030490">
    <property type="term" value="P:maturation of SSU-rRNA"/>
    <property type="evidence" value="ECO:0007669"/>
    <property type="project" value="UniProtKB-UniRule"/>
</dbReference>
<dbReference type="Gene3D" id="3.30.300.20">
    <property type="match status" value="1"/>
</dbReference>
<dbReference type="HAMAP" id="MF_00003">
    <property type="entry name" value="RbfA"/>
    <property type="match status" value="1"/>
</dbReference>
<dbReference type="InterPro" id="IPR015946">
    <property type="entry name" value="KH_dom-like_a/b"/>
</dbReference>
<dbReference type="InterPro" id="IPR000238">
    <property type="entry name" value="RbfA"/>
</dbReference>
<dbReference type="InterPro" id="IPR023799">
    <property type="entry name" value="RbfA_dom_sf"/>
</dbReference>
<dbReference type="InterPro" id="IPR020053">
    <property type="entry name" value="Ribosome-bd_factorA_CS"/>
</dbReference>
<dbReference type="NCBIfam" id="TIGR00082">
    <property type="entry name" value="rbfA"/>
    <property type="match status" value="1"/>
</dbReference>
<dbReference type="PANTHER" id="PTHR33515">
    <property type="entry name" value="RIBOSOME-BINDING FACTOR A, CHLOROPLASTIC-RELATED"/>
    <property type="match status" value="1"/>
</dbReference>
<dbReference type="PANTHER" id="PTHR33515:SF1">
    <property type="entry name" value="RIBOSOME-BINDING FACTOR A, CHLOROPLASTIC-RELATED"/>
    <property type="match status" value="1"/>
</dbReference>
<dbReference type="Pfam" id="PF02033">
    <property type="entry name" value="RBFA"/>
    <property type="match status" value="1"/>
</dbReference>
<dbReference type="SUPFAM" id="SSF89919">
    <property type="entry name" value="Ribosome-binding factor A, RbfA"/>
    <property type="match status" value="1"/>
</dbReference>
<dbReference type="PROSITE" id="PS01319">
    <property type="entry name" value="RBFA"/>
    <property type="match status" value="1"/>
</dbReference>
<protein>
    <recommendedName>
        <fullName evidence="1">Ribosome-binding factor A</fullName>
    </recommendedName>
</protein>
<reference key="1">
    <citation type="journal article" date="2008" name="DNA Res.">
        <title>Comparative genome analysis of Lactobacillus reuteri and Lactobacillus fermentum reveal a genomic island for reuterin and cobalamin production.</title>
        <authorList>
            <person name="Morita H."/>
            <person name="Toh H."/>
            <person name="Fukuda S."/>
            <person name="Horikawa H."/>
            <person name="Oshima K."/>
            <person name="Suzuki T."/>
            <person name="Murakami M."/>
            <person name="Hisamatsu S."/>
            <person name="Kato Y."/>
            <person name="Takizawa T."/>
            <person name="Fukuoka H."/>
            <person name="Yoshimura T."/>
            <person name="Itoh K."/>
            <person name="O'Sullivan D.J."/>
            <person name="McKay L.L."/>
            <person name="Ohno H."/>
            <person name="Kikuchi J."/>
            <person name="Masaoka T."/>
            <person name="Hattori M."/>
        </authorList>
    </citation>
    <scope>NUCLEOTIDE SEQUENCE [LARGE SCALE GENOMIC DNA]</scope>
    <source>
        <strain>NBRC 3956 / LMG 18251</strain>
    </source>
</reference>
<accession>B2GBN8</accession>
<evidence type="ECO:0000255" key="1">
    <source>
        <dbReference type="HAMAP-Rule" id="MF_00003"/>
    </source>
</evidence>
<keyword id="KW-0963">Cytoplasm</keyword>
<keyword id="KW-1185">Reference proteome</keyword>
<keyword id="KW-0690">Ribosome biogenesis</keyword>
<sequence>MPNKQFRVERLAQQIQREVDDILLKRVRDPRVNGVTVTGVDVTGDLQQATIYYTILSKLASDAEKTQTGLDKATGLVRSELGSRLNIFKAPEIKFVRDPSIEYGSRIDELLNELHKNNEL</sequence>
<name>RBFA_LIMF3</name>